<dbReference type="EMBL" id="CP001033">
    <property type="protein sequence ID" value="ACB89494.1"/>
    <property type="molecule type" value="Genomic_DNA"/>
</dbReference>
<dbReference type="RefSeq" id="WP_001118385.1">
    <property type="nucleotide sequence ID" value="NC_010582.1"/>
</dbReference>
<dbReference type="SMR" id="B2IS66"/>
<dbReference type="GeneID" id="93964226"/>
<dbReference type="KEGG" id="spw:SPCG_0242"/>
<dbReference type="HOGENOM" id="CLU_072439_5_0_9"/>
<dbReference type="GO" id="GO:1990904">
    <property type="term" value="C:ribonucleoprotein complex"/>
    <property type="evidence" value="ECO:0007669"/>
    <property type="project" value="UniProtKB-KW"/>
</dbReference>
<dbReference type="GO" id="GO:0005840">
    <property type="term" value="C:ribosome"/>
    <property type="evidence" value="ECO:0007669"/>
    <property type="project" value="UniProtKB-KW"/>
</dbReference>
<dbReference type="GO" id="GO:0019843">
    <property type="term" value="F:rRNA binding"/>
    <property type="evidence" value="ECO:0007669"/>
    <property type="project" value="UniProtKB-UniRule"/>
</dbReference>
<dbReference type="GO" id="GO:0003735">
    <property type="term" value="F:structural constituent of ribosome"/>
    <property type="evidence" value="ECO:0007669"/>
    <property type="project" value="InterPro"/>
</dbReference>
<dbReference type="GO" id="GO:0006412">
    <property type="term" value="P:translation"/>
    <property type="evidence" value="ECO:0007669"/>
    <property type="project" value="UniProtKB-UniRule"/>
</dbReference>
<dbReference type="FunFam" id="3.30.420.80:FF:000001">
    <property type="entry name" value="30S ribosomal protein S11"/>
    <property type="match status" value="1"/>
</dbReference>
<dbReference type="Gene3D" id="3.30.420.80">
    <property type="entry name" value="Ribosomal protein S11"/>
    <property type="match status" value="1"/>
</dbReference>
<dbReference type="HAMAP" id="MF_01310">
    <property type="entry name" value="Ribosomal_uS11"/>
    <property type="match status" value="1"/>
</dbReference>
<dbReference type="InterPro" id="IPR001971">
    <property type="entry name" value="Ribosomal_uS11"/>
</dbReference>
<dbReference type="InterPro" id="IPR019981">
    <property type="entry name" value="Ribosomal_uS11_bac-type"/>
</dbReference>
<dbReference type="InterPro" id="IPR018102">
    <property type="entry name" value="Ribosomal_uS11_CS"/>
</dbReference>
<dbReference type="InterPro" id="IPR036967">
    <property type="entry name" value="Ribosomal_uS11_sf"/>
</dbReference>
<dbReference type="NCBIfam" id="NF003698">
    <property type="entry name" value="PRK05309.1"/>
    <property type="match status" value="1"/>
</dbReference>
<dbReference type="NCBIfam" id="TIGR03632">
    <property type="entry name" value="uS11_bact"/>
    <property type="match status" value="1"/>
</dbReference>
<dbReference type="PANTHER" id="PTHR11759">
    <property type="entry name" value="40S RIBOSOMAL PROTEIN S14/30S RIBOSOMAL PROTEIN S11"/>
    <property type="match status" value="1"/>
</dbReference>
<dbReference type="Pfam" id="PF00411">
    <property type="entry name" value="Ribosomal_S11"/>
    <property type="match status" value="1"/>
</dbReference>
<dbReference type="PIRSF" id="PIRSF002131">
    <property type="entry name" value="Ribosomal_S11"/>
    <property type="match status" value="1"/>
</dbReference>
<dbReference type="SUPFAM" id="SSF53137">
    <property type="entry name" value="Translational machinery components"/>
    <property type="match status" value="1"/>
</dbReference>
<dbReference type="PROSITE" id="PS00054">
    <property type="entry name" value="RIBOSOMAL_S11"/>
    <property type="match status" value="1"/>
</dbReference>
<proteinExistence type="inferred from homology"/>
<organism>
    <name type="scientific">Streptococcus pneumoniae (strain CGSP14)</name>
    <dbReference type="NCBI Taxonomy" id="516950"/>
    <lineage>
        <taxon>Bacteria</taxon>
        <taxon>Bacillati</taxon>
        <taxon>Bacillota</taxon>
        <taxon>Bacilli</taxon>
        <taxon>Lactobacillales</taxon>
        <taxon>Streptococcaceae</taxon>
        <taxon>Streptococcus</taxon>
    </lineage>
</organism>
<gene>
    <name evidence="1" type="primary">rpsK</name>
    <name type="ordered locus">SPCG_0242</name>
</gene>
<comment type="function">
    <text evidence="1">Located on the platform of the 30S subunit, it bridges several disparate RNA helices of the 16S rRNA. Forms part of the Shine-Dalgarno cleft in the 70S ribosome.</text>
</comment>
<comment type="subunit">
    <text evidence="1">Part of the 30S ribosomal subunit. Interacts with proteins S7 and S18. Binds to IF-3.</text>
</comment>
<comment type="similarity">
    <text evidence="1">Belongs to the universal ribosomal protein uS11 family.</text>
</comment>
<accession>B2IS66</accession>
<keyword id="KW-0687">Ribonucleoprotein</keyword>
<keyword id="KW-0689">Ribosomal protein</keyword>
<keyword id="KW-0694">RNA-binding</keyword>
<keyword id="KW-0699">rRNA-binding</keyword>
<feature type="chain" id="PRO_1000141148" description="Small ribosomal subunit protein uS11">
    <location>
        <begin position="1"/>
        <end position="127"/>
    </location>
</feature>
<name>RS11_STRPS</name>
<protein>
    <recommendedName>
        <fullName evidence="1">Small ribosomal subunit protein uS11</fullName>
    </recommendedName>
    <alternativeName>
        <fullName evidence="2">30S ribosomal protein S11</fullName>
    </alternativeName>
</protein>
<evidence type="ECO:0000255" key="1">
    <source>
        <dbReference type="HAMAP-Rule" id="MF_01310"/>
    </source>
</evidence>
<evidence type="ECO:0000305" key="2"/>
<sequence length="127" mass="13385">MAKPTRKRRVKKNIESGIAHIHATFNNTIVMITDVHGNAIAWSSAGALGFKGSRKSTPFAAQMASEAAAKSAQEHGLKSVEVTVKGPGSGRESAIRALAAAGLEVTAIRDVTPVPHNGARPPKRRRV</sequence>
<reference key="1">
    <citation type="journal article" date="2009" name="BMC Genomics">
        <title>Genome evolution driven by host adaptations results in a more virulent and antimicrobial-resistant Streptococcus pneumoniae serotype 14.</title>
        <authorList>
            <person name="Ding F."/>
            <person name="Tang P."/>
            <person name="Hsu M.-H."/>
            <person name="Cui P."/>
            <person name="Hu S."/>
            <person name="Yu J."/>
            <person name="Chiu C.-H."/>
        </authorList>
    </citation>
    <scope>NUCLEOTIDE SEQUENCE [LARGE SCALE GENOMIC DNA]</scope>
    <source>
        <strain>CGSP14</strain>
    </source>
</reference>